<proteinExistence type="evidence at protein level"/>
<comment type="function">
    <text>Heme chaperone required for the biogenesis of c-type cytochromes. Transiently binds heme delivered by CcmC and transfers the heme to apo-cytochromes in a process facilitated by CcmF and CcmH.</text>
</comment>
<comment type="subunit">
    <text evidence="3 4 6">Forms a ternary complex with CcmC and CcmD. Interacts with CcmF. Shuttles between CcmC and CcmF for heme delivery.</text>
</comment>
<comment type="interaction">
    <interactant intactId="EBI-1128007">
        <id>P69490</id>
    </interactant>
    <interactant intactId="EBI-2123469">
        <id>P0ABM1</id>
        <label>ccmC</label>
    </interactant>
    <organismsDiffer>false</organismsDiffer>
    <experiments>7</experiments>
</comment>
<comment type="subcellular location">
    <subcellularLocation>
        <location evidence="1">Cell inner membrane</location>
        <topology evidence="1">Single-pass type II membrane protein</topology>
        <orientation evidence="1">Periplasmic side</orientation>
    </subcellularLocation>
    <text>Stabilized by CcmD in the membrane.</text>
</comment>
<comment type="similarity">
    <text evidence="1">Belongs to the CcmE/CycJ family.</text>
</comment>
<organism>
    <name type="scientific">Escherichia coli (strain K12)</name>
    <dbReference type="NCBI Taxonomy" id="83333"/>
    <lineage>
        <taxon>Bacteria</taxon>
        <taxon>Pseudomonadati</taxon>
        <taxon>Pseudomonadota</taxon>
        <taxon>Gammaproteobacteria</taxon>
        <taxon>Enterobacterales</taxon>
        <taxon>Enterobacteriaceae</taxon>
        <taxon>Escherichia</taxon>
    </lineage>
</organism>
<keyword id="KW-0002">3D-structure</keyword>
<keyword id="KW-0997">Cell inner membrane</keyword>
<keyword id="KW-1003">Cell membrane</keyword>
<keyword id="KW-0201">Cytochrome c-type biogenesis</keyword>
<keyword id="KW-0903">Direct protein sequencing</keyword>
<keyword id="KW-0349">Heme</keyword>
<keyword id="KW-0408">Iron</keyword>
<keyword id="KW-0472">Membrane</keyword>
<keyword id="KW-0479">Metal-binding</keyword>
<keyword id="KW-1185">Reference proteome</keyword>
<keyword id="KW-0735">Signal-anchor</keyword>
<keyword id="KW-0812">Transmembrane</keyword>
<keyword id="KW-1133">Transmembrane helix</keyword>
<gene>
    <name evidence="1" type="primary">ccmE</name>
    <name type="synonym">yejS</name>
    <name type="ordered locus">b2197</name>
    <name type="ordered locus">JW2185</name>
</gene>
<name>CCME_ECOLI</name>
<dbReference type="EMBL" id="U00008">
    <property type="protein sequence ID" value="AAA16389.1"/>
    <property type="molecule type" value="Genomic_DNA"/>
</dbReference>
<dbReference type="EMBL" id="U00096">
    <property type="protein sequence ID" value="AAC75257.1"/>
    <property type="molecule type" value="Genomic_DNA"/>
</dbReference>
<dbReference type="EMBL" id="AP009048">
    <property type="protein sequence ID" value="BAE76660.1"/>
    <property type="molecule type" value="Genomic_DNA"/>
</dbReference>
<dbReference type="PIR" id="C64989">
    <property type="entry name" value="C64989"/>
</dbReference>
<dbReference type="RefSeq" id="NP_416701.1">
    <property type="nucleotide sequence ID" value="NC_000913.3"/>
</dbReference>
<dbReference type="RefSeq" id="WP_001026418.1">
    <property type="nucleotide sequence ID" value="NZ_STEB01000002.1"/>
</dbReference>
<dbReference type="PDB" id="1SR3">
    <property type="method" value="NMR"/>
    <property type="chains" value="A=30-159"/>
</dbReference>
<dbReference type="PDB" id="8CE8">
    <property type="method" value="EM"/>
    <property type="resolution" value="3.81 A"/>
    <property type="chains" value="E=1-159"/>
</dbReference>
<dbReference type="PDBsum" id="1SR3"/>
<dbReference type="PDBsum" id="8CE8"/>
<dbReference type="EMDB" id="EMD-16601"/>
<dbReference type="SMR" id="P69490"/>
<dbReference type="BioGRID" id="4260483">
    <property type="interactions" value="137"/>
</dbReference>
<dbReference type="ComplexPortal" id="CPX-3568">
    <property type="entry name" value="CcmABCDE system I cytochrome c biogenesis complex"/>
</dbReference>
<dbReference type="DIP" id="DIP-9255N"/>
<dbReference type="FunCoup" id="P69490">
    <property type="interactions" value="55"/>
</dbReference>
<dbReference type="IntAct" id="P69490">
    <property type="interactions" value="8"/>
</dbReference>
<dbReference type="MINT" id="P69490"/>
<dbReference type="STRING" id="511145.b2197"/>
<dbReference type="jPOST" id="P69490"/>
<dbReference type="PaxDb" id="511145-b2197"/>
<dbReference type="EnsemblBacteria" id="AAC75257">
    <property type="protein sequence ID" value="AAC75257"/>
    <property type="gene ID" value="b2197"/>
</dbReference>
<dbReference type="GeneID" id="86860369"/>
<dbReference type="GeneID" id="946697"/>
<dbReference type="KEGG" id="ecj:JW2185"/>
<dbReference type="KEGG" id="eco:b2197"/>
<dbReference type="KEGG" id="ecoc:C3026_12280"/>
<dbReference type="PATRIC" id="fig|1411691.4.peg.39"/>
<dbReference type="EchoBASE" id="EB1986"/>
<dbReference type="eggNOG" id="COG2332">
    <property type="taxonomic scope" value="Bacteria"/>
</dbReference>
<dbReference type="HOGENOM" id="CLU_079503_1_0_6"/>
<dbReference type="InParanoid" id="P69490"/>
<dbReference type="OMA" id="HVEFAVH"/>
<dbReference type="OrthoDB" id="9793584at2"/>
<dbReference type="PhylomeDB" id="P69490"/>
<dbReference type="BioCyc" id="EcoCyc:CCME-MONOMER"/>
<dbReference type="BioCyc" id="MetaCyc:CCME-MONOMER"/>
<dbReference type="EvolutionaryTrace" id="P69490"/>
<dbReference type="PRO" id="PR:P69490"/>
<dbReference type="Proteomes" id="UP000000625">
    <property type="component" value="Chromosome"/>
</dbReference>
<dbReference type="GO" id="GO:0043190">
    <property type="term" value="C:ATP-binding cassette (ABC) transporter complex"/>
    <property type="evidence" value="ECO:0000303"/>
    <property type="project" value="ComplexPortal"/>
</dbReference>
<dbReference type="GO" id="GO:0020037">
    <property type="term" value="F:heme binding"/>
    <property type="evidence" value="ECO:0000314"/>
    <property type="project" value="EcoCyc"/>
</dbReference>
<dbReference type="GO" id="GO:0046872">
    <property type="term" value="F:metal ion binding"/>
    <property type="evidence" value="ECO:0007669"/>
    <property type="project" value="UniProtKB-KW"/>
</dbReference>
<dbReference type="GO" id="GO:1903607">
    <property type="term" value="P:cytochrome c biosynthetic process"/>
    <property type="evidence" value="ECO:0000314"/>
    <property type="project" value="EcoCyc"/>
</dbReference>
<dbReference type="GO" id="GO:0017004">
    <property type="term" value="P:cytochrome complex assembly"/>
    <property type="evidence" value="ECO:0000303"/>
    <property type="project" value="ComplexPortal"/>
</dbReference>
<dbReference type="GO" id="GO:1904334">
    <property type="term" value="P:heme import across plasma membrane"/>
    <property type="evidence" value="ECO:0000303"/>
    <property type="project" value="ComplexPortal"/>
</dbReference>
<dbReference type="DisProt" id="DP01729"/>
<dbReference type="FunFam" id="2.40.50.140:FF:000104">
    <property type="entry name" value="Cytochrome c-type biogenesis protein CcmE"/>
    <property type="match status" value="1"/>
</dbReference>
<dbReference type="Gene3D" id="2.40.50.140">
    <property type="entry name" value="Nucleic acid-binding proteins"/>
    <property type="match status" value="1"/>
</dbReference>
<dbReference type="HAMAP" id="MF_01959">
    <property type="entry name" value="CcmE"/>
    <property type="match status" value="1"/>
</dbReference>
<dbReference type="InterPro" id="IPR004329">
    <property type="entry name" value="CcmE"/>
</dbReference>
<dbReference type="InterPro" id="IPR036127">
    <property type="entry name" value="CcmE-like_sf"/>
</dbReference>
<dbReference type="InterPro" id="IPR012340">
    <property type="entry name" value="NA-bd_OB-fold"/>
</dbReference>
<dbReference type="NCBIfam" id="NF009635">
    <property type="entry name" value="PRK13150.1"/>
    <property type="match status" value="1"/>
</dbReference>
<dbReference type="NCBIfam" id="NF009638">
    <property type="entry name" value="PRK13165.1"/>
    <property type="match status" value="1"/>
</dbReference>
<dbReference type="NCBIfam" id="NF009727">
    <property type="entry name" value="PRK13254.1-1"/>
    <property type="match status" value="1"/>
</dbReference>
<dbReference type="NCBIfam" id="NF009729">
    <property type="entry name" value="PRK13254.1-3"/>
    <property type="match status" value="1"/>
</dbReference>
<dbReference type="PANTHER" id="PTHR34128">
    <property type="entry name" value="CYTOCHROME C-TYPE BIOGENESIS PROTEIN CCME HOMOLOG, MITOCHONDRIAL"/>
    <property type="match status" value="1"/>
</dbReference>
<dbReference type="PANTHER" id="PTHR34128:SF2">
    <property type="entry name" value="CYTOCHROME C-TYPE BIOGENESIS PROTEIN CCME HOMOLOG, MITOCHONDRIAL"/>
    <property type="match status" value="1"/>
</dbReference>
<dbReference type="Pfam" id="PF03100">
    <property type="entry name" value="CcmE"/>
    <property type="match status" value="1"/>
</dbReference>
<dbReference type="SUPFAM" id="SSF82093">
    <property type="entry name" value="Heme chaperone CcmE"/>
    <property type="match status" value="1"/>
</dbReference>
<accession>P69490</accession>
<accession>P33928</accession>
<accession>Q2MAP6</accession>
<feature type="chain" id="PRO_0000201575" description="Cytochrome c-type biogenesis protein CcmE">
    <location>
        <begin position="1"/>
        <end position="159"/>
    </location>
</feature>
<feature type="topological domain" description="Cytoplasmic" evidence="1">
    <location>
        <begin position="1"/>
        <end position="8"/>
    </location>
</feature>
<feature type="transmembrane region" description="Helical; Signal-anchor for type II membrane protein" evidence="1">
    <location>
        <begin position="9"/>
        <end position="29"/>
    </location>
</feature>
<feature type="topological domain" description="Periplasmic" evidence="1">
    <location>
        <begin position="30"/>
        <end position="159"/>
    </location>
</feature>
<feature type="region of interest" description="Disordered" evidence="2">
    <location>
        <begin position="132"/>
        <end position="159"/>
    </location>
</feature>
<feature type="compositionally biased region" description="Basic and acidic residues" evidence="2">
    <location>
        <begin position="132"/>
        <end position="147"/>
    </location>
</feature>
<feature type="binding site" description="covalent">
    <location>
        <position position="130"/>
    </location>
    <ligand>
        <name>heme</name>
        <dbReference type="ChEBI" id="CHEBI:30413"/>
    </ligand>
</feature>
<feature type="binding site" description="axial binding residue">
    <location>
        <position position="134"/>
    </location>
    <ligand>
        <name>heme</name>
        <dbReference type="ChEBI" id="CHEBI:30413"/>
    </ligand>
    <ligandPart>
        <name>Fe</name>
        <dbReference type="ChEBI" id="CHEBI:18248"/>
    </ligandPart>
</feature>
<feature type="mutagenesis site" description="Abolishes heme binding." evidence="5">
    <original>H</original>
    <variation>A</variation>
    <location>
        <position position="130"/>
    </location>
</feature>
<feature type="mutagenesis site" description="Can still form a covalent bond with heme, but blocks heme release transfer to cytochrome c." evidence="5">
    <original>H</original>
    <variation>C</variation>
    <location>
        <position position="130"/>
    </location>
</feature>
<feature type="strand" evidence="7">
    <location>
        <begin position="33"/>
        <end position="35"/>
    </location>
</feature>
<feature type="turn" evidence="7">
    <location>
        <begin position="40"/>
        <end position="44"/>
    </location>
</feature>
<feature type="turn" evidence="7">
    <location>
        <begin position="48"/>
        <end position="50"/>
    </location>
</feature>
<feature type="strand" evidence="7">
    <location>
        <begin position="58"/>
        <end position="66"/>
    </location>
</feature>
<feature type="turn" evidence="7">
    <location>
        <begin position="68"/>
        <end position="70"/>
    </location>
</feature>
<feature type="strand" evidence="7">
    <location>
        <begin position="75"/>
        <end position="85"/>
    </location>
</feature>
<feature type="strand" evidence="7">
    <location>
        <begin position="90"/>
        <end position="97"/>
    </location>
</feature>
<feature type="strand" evidence="7">
    <location>
        <begin position="107"/>
        <end position="115"/>
    </location>
</feature>
<feature type="strand" evidence="7">
    <location>
        <begin position="117"/>
        <end position="125"/>
    </location>
</feature>
<feature type="helix" evidence="7">
    <location>
        <begin position="137"/>
        <end position="140"/>
    </location>
</feature>
<protein>
    <recommendedName>
        <fullName evidence="1">Cytochrome c-type biogenesis protein CcmE</fullName>
    </recommendedName>
    <alternativeName>
        <fullName evidence="1">Cytochrome c maturation protein E</fullName>
    </alternativeName>
    <alternativeName>
        <fullName evidence="1">Heme chaperone CcmE</fullName>
    </alternativeName>
</protein>
<evidence type="ECO:0000255" key="1">
    <source>
        <dbReference type="HAMAP-Rule" id="MF_01959"/>
    </source>
</evidence>
<evidence type="ECO:0000256" key="2">
    <source>
        <dbReference type="SAM" id="MobiDB-lite"/>
    </source>
</evidence>
<evidence type="ECO:0000269" key="3">
    <source>
    </source>
</evidence>
<evidence type="ECO:0000269" key="4">
    <source>
    </source>
</evidence>
<evidence type="ECO:0000269" key="5">
    <source>
    </source>
</evidence>
<evidence type="ECO:0000269" key="6">
    <source>
    </source>
</evidence>
<evidence type="ECO:0007829" key="7">
    <source>
        <dbReference type="PDB" id="1SR3"/>
    </source>
</evidence>
<sequence length="159" mass="17698">MNIRRKNRLWIACAVLAGLALTIGLVLYALRSNIDLFYTPGEILYGKRETQQMPEVGQRLRVGGMVMPGSVQRDPNSLKVTFTIYDAEGSVDVSYEGILPDLFREGQGVVVQGELEKGNHILAKEVLAKHDENYTPPEVEKAMEANHRRPASVYKDPAS</sequence>
<reference key="1">
    <citation type="submission" date="1993-10" db="EMBL/GenBank/DDBJ databases">
        <title>Automated multiplex sequencing of the E.coli genome.</title>
        <authorList>
            <person name="Richterich P."/>
            <person name="Lakey N."/>
            <person name="Gryan G."/>
            <person name="Jaehn L."/>
            <person name="Mintz L."/>
            <person name="Robison K."/>
            <person name="Church G.M."/>
        </authorList>
    </citation>
    <scope>NUCLEOTIDE SEQUENCE [LARGE SCALE GENOMIC DNA]</scope>
    <source>
        <strain>K12 / BHB2600</strain>
    </source>
</reference>
<reference key="2">
    <citation type="journal article" date="1997" name="Science">
        <title>The complete genome sequence of Escherichia coli K-12.</title>
        <authorList>
            <person name="Blattner F.R."/>
            <person name="Plunkett G. III"/>
            <person name="Bloch C.A."/>
            <person name="Perna N.T."/>
            <person name="Burland V."/>
            <person name="Riley M."/>
            <person name="Collado-Vides J."/>
            <person name="Glasner J.D."/>
            <person name="Rode C.K."/>
            <person name="Mayhew G.F."/>
            <person name="Gregor J."/>
            <person name="Davis N.W."/>
            <person name="Kirkpatrick H.A."/>
            <person name="Goeden M.A."/>
            <person name="Rose D.J."/>
            <person name="Mau B."/>
            <person name="Shao Y."/>
        </authorList>
    </citation>
    <scope>NUCLEOTIDE SEQUENCE [LARGE SCALE GENOMIC DNA]</scope>
    <source>
        <strain>K12 / MG1655 / ATCC 47076</strain>
    </source>
</reference>
<reference key="3">
    <citation type="journal article" date="2006" name="Mol. Syst. Biol.">
        <title>Highly accurate genome sequences of Escherichia coli K-12 strains MG1655 and W3110.</title>
        <authorList>
            <person name="Hayashi K."/>
            <person name="Morooka N."/>
            <person name="Yamamoto Y."/>
            <person name="Fujita K."/>
            <person name="Isono K."/>
            <person name="Choi S."/>
            <person name="Ohtsubo E."/>
            <person name="Baba T."/>
            <person name="Wanner B.L."/>
            <person name="Mori H."/>
            <person name="Horiuchi T."/>
        </authorList>
    </citation>
    <scope>NUCLEOTIDE SEQUENCE [LARGE SCALE GENOMIC DNA]</scope>
    <source>
        <strain>K12 / W3110 / ATCC 27325 / DSM 5911</strain>
    </source>
</reference>
<reference key="4">
    <citation type="journal article" date="1998" name="Science">
        <title>Prototype of a heme chaperone essential for cytochrome c maturation.</title>
        <authorList>
            <person name="Schulz H."/>
            <person name="Hennecke H."/>
            <person name="Thoeny-Meyer L."/>
        </authorList>
    </citation>
    <scope>PROTEIN SEQUENCE OF 131-140</scope>
    <scope>HEME-BINDING</scope>
</reference>
<reference key="5">
    <citation type="journal article" date="1995" name="J. Bacteriol.">
        <title>Escherichia coli genes required for cytochrome c maturation.</title>
        <authorList>
            <person name="Thoeny-Meyer L."/>
            <person name="Fischer F."/>
            <person name="Kunzler P."/>
            <person name="Ritz D."/>
            <person name="Hennecke H."/>
        </authorList>
    </citation>
    <scope>CHARACTERIZATION</scope>
    <scope>GENE NAME</scope>
</reference>
<reference key="6">
    <citation type="journal article" date="2001" name="J. Biol. Chem.">
        <title>Physical interaction of CcmC with heme and the heme chaperone CcmE during cytochrome c maturation.</title>
        <authorList>
            <person name="Ren Q."/>
            <person name="Thoeny-Meyer L."/>
        </authorList>
    </citation>
    <scope>INTERACTION WITH CCMC</scope>
</reference>
<reference key="7">
    <citation type="journal article" date="2002" name="J. Biol. Chem.">
        <title>A bacterial cytochrome c heme lyase. CcmF forms a complex with the heme chaperone CcmE and CcmH but not with apocytochrome c.</title>
        <authorList>
            <person name="Ren Q."/>
            <person name="Ahuja U."/>
            <person name="Thoeny-Meyer L."/>
        </authorList>
    </citation>
    <scope>INTERACTION WITH CCMF</scope>
</reference>
<reference key="8">
    <citation type="journal article" date="2003" name="J. Bacteriol.">
        <title>Biochemical and mutational characterization of the heme chaperone CcmE reveals a heme binding site.</title>
        <authorList>
            <person name="Enggist E."/>
            <person name="Schneider M.J."/>
            <person name="Schulz H."/>
            <person name="Thoeny-Meyer L."/>
        </authorList>
    </citation>
    <scope>HEME-BINDING</scope>
    <scope>MUTAGENESIS OF HIS-130</scope>
</reference>
<reference key="9">
    <citation type="journal article" date="2005" name="J. Biol. Chem.">
        <title>CcmD is involved in complex formation between CcmC and the heme chaperone CcmE during cytochrome c maturation.</title>
        <authorList>
            <person name="Ahuja U."/>
            <person name="Thoeny-Meyer L."/>
        </authorList>
    </citation>
    <scope>INTERACTION WITH CCMD</scope>
</reference>
<reference key="10">
    <citation type="journal article" date="2002" name="Structure">
        <title>NMR structure of the heme chaperone CcmE reveals a novel functional motif.</title>
        <authorList>
            <person name="Enggist E."/>
            <person name="Thoeny-Meyer L."/>
            <person name="Guntert P."/>
            <person name="Pervushin K."/>
        </authorList>
    </citation>
    <scope>STRUCTURE BY NMR OF 30-159</scope>
</reference>